<comment type="catalytic activity">
    <reaction>
        <text>glucuronate acceptor + UDP-alpha-D-glucuronate = acceptor beta-D-glucuronoside + UDP + H(+)</text>
        <dbReference type="Rhea" id="RHEA:21032"/>
        <dbReference type="ChEBI" id="CHEBI:15378"/>
        <dbReference type="ChEBI" id="CHEBI:58052"/>
        <dbReference type="ChEBI" id="CHEBI:58223"/>
        <dbReference type="ChEBI" id="CHEBI:132367"/>
        <dbReference type="ChEBI" id="CHEBI:132368"/>
        <dbReference type="EC" id="2.4.1.17"/>
    </reaction>
</comment>
<comment type="subcellular location">
    <subcellularLocation>
        <location evidence="3">Membrane</location>
        <topology evidence="3">Single-pass membrane protein</topology>
    </subcellularLocation>
</comment>
<comment type="similarity">
    <text evidence="3">Belongs to the UDP-glycosyltransferase family.</text>
</comment>
<dbReference type="EC" id="2.4.1.17"/>
<dbReference type="EMBL" id="FO080169">
    <property type="protein sequence ID" value="CCD61751.1"/>
    <property type="molecule type" value="Genomic_DNA"/>
</dbReference>
<dbReference type="PIR" id="T15329">
    <property type="entry name" value="T15329"/>
</dbReference>
<dbReference type="RefSeq" id="NP_508112.1">
    <property type="nucleotide sequence ID" value="NM_075711.7"/>
</dbReference>
<dbReference type="SMR" id="Q10941"/>
<dbReference type="BioGRID" id="45357">
    <property type="interactions" value="2"/>
</dbReference>
<dbReference type="DIP" id="DIP-26251N"/>
<dbReference type="FunCoup" id="Q10941">
    <property type="interactions" value="272"/>
</dbReference>
<dbReference type="IntAct" id="Q10941">
    <property type="interactions" value="2"/>
</dbReference>
<dbReference type="STRING" id="6239.B0310.5a.1"/>
<dbReference type="CAZy" id="GT1">
    <property type="family name" value="Glycosyltransferase Family 1"/>
</dbReference>
<dbReference type="GlyCosmos" id="Q10941">
    <property type="glycosylation" value="1 site, No reported glycans"/>
</dbReference>
<dbReference type="iPTMnet" id="Q10941"/>
<dbReference type="PaxDb" id="6239-B0310.5"/>
<dbReference type="PeptideAtlas" id="Q10941"/>
<dbReference type="EnsemblMetazoa" id="B0310.5a.1">
    <property type="protein sequence ID" value="B0310.5a.1"/>
    <property type="gene ID" value="WBGene00015141"/>
</dbReference>
<dbReference type="GeneID" id="180404"/>
<dbReference type="KEGG" id="cel:CELE_B0310.5"/>
<dbReference type="UCSC" id="B0310.5">
    <property type="organism name" value="c. elegans"/>
</dbReference>
<dbReference type="AGR" id="WB:WBGene00015141"/>
<dbReference type="CTD" id="180404"/>
<dbReference type="WormBase" id="B0310.5a">
    <property type="protein sequence ID" value="CE03878"/>
    <property type="gene ID" value="WBGene00015141"/>
    <property type="gene designation" value="ugt-46"/>
</dbReference>
<dbReference type="eggNOG" id="KOG1192">
    <property type="taxonomic scope" value="Eukaryota"/>
</dbReference>
<dbReference type="GeneTree" id="ENSGT00970000196182"/>
<dbReference type="HOGENOM" id="CLU_012949_1_3_1"/>
<dbReference type="InParanoid" id="Q10941"/>
<dbReference type="OMA" id="IPTIFGW"/>
<dbReference type="OrthoDB" id="5835829at2759"/>
<dbReference type="PhylomeDB" id="Q10941"/>
<dbReference type="PRO" id="PR:Q10941"/>
<dbReference type="Proteomes" id="UP000001940">
    <property type="component" value="Chromosome X"/>
</dbReference>
<dbReference type="Bgee" id="WBGene00015141">
    <property type="expression patterns" value="Expressed in larva and 4 other cell types or tissues"/>
</dbReference>
<dbReference type="ExpressionAtlas" id="Q10941">
    <property type="expression patterns" value="baseline and differential"/>
</dbReference>
<dbReference type="GO" id="GO:0016020">
    <property type="term" value="C:membrane"/>
    <property type="evidence" value="ECO:0007669"/>
    <property type="project" value="UniProtKB-SubCell"/>
</dbReference>
<dbReference type="GO" id="GO:0015020">
    <property type="term" value="F:glucuronosyltransferase activity"/>
    <property type="evidence" value="ECO:0007669"/>
    <property type="project" value="UniProtKB-EC"/>
</dbReference>
<dbReference type="GO" id="GO:0008194">
    <property type="term" value="F:UDP-glycosyltransferase activity"/>
    <property type="evidence" value="ECO:0000318"/>
    <property type="project" value="GO_Central"/>
</dbReference>
<dbReference type="CDD" id="cd03784">
    <property type="entry name" value="GT1_Gtf-like"/>
    <property type="match status" value="1"/>
</dbReference>
<dbReference type="FunFam" id="3.40.50.2000:FF:000021">
    <property type="entry name" value="UDP-glucuronosyltransferase"/>
    <property type="match status" value="1"/>
</dbReference>
<dbReference type="Gene3D" id="3.40.50.2000">
    <property type="entry name" value="Glycogen Phosphorylase B"/>
    <property type="match status" value="1"/>
</dbReference>
<dbReference type="InterPro" id="IPR050271">
    <property type="entry name" value="UDP-glycosyltransferase"/>
</dbReference>
<dbReference type="InterPro" id="IPR002213">
    <property type="entry name" value="UDP_glucos_trans"/>
</dbReference>
<dbReference type="InterPro" id="IPR035595">
    <property type="entry name" value="UDP_glycos_trans_CS"/>
</dbReference>
<dbReference type="PANTHER" id="PTHR48043">
    <property type="entry name" value="EG:EG0003.4 PROTEIN-RELATED"/>
    <property type="match status" value="1"/>
</dbReference>
<dbReference type="PANTHER" id="PTHR48043:SF85">
    <property type="entry name" value="UDP-GLUCURONOSYLTRANSFERASE UGT-46-RELATED"/>
    <property type="match status" value="1"/>
</dbReference>
<dbReference type="Pfam" id="PF00201">
    <property type="entry name" value="UDPGT"/>
    <property type="match status" value="1"/>
</dbReference>
<dbReference type="SUPFAM" id="SSF53756">
    <property type="entry name" value="UDP-Glycosyltransferase/glycogen phosphorylase"/>
    <property type="match status" value="1"/>
</dbReference>
<dbReference type="PROSITE" id="PS00375">
    <property type="entry name" value="UDPGT"/>
    <property type="match status" value="1"/>
</dbReference>
<reference key="1">
    <citation type="journal article" date="1998" name="Science">
        <title>Genome sequence of the nematode C. elegans: a platform for investigating biology.</title>
        <authorList>
            <consortium name="The C. elegans sequencing consortium"/>
        </authorList>
    </citation>
    <scope>NUCLEOTIDE SEQUENCE [LARGE SCALE GENOMIC DNA]</scope>
    <source>
        <strain>Bristol N2</strain>
    </source>
</reference>
<reference key="2">
    <citation type="journal article" date="2005" name="Glycobiology">
        <title>Identification of the hydrophobic glycoproteins of Caenorhabditis elegans.</title>
        <authorList>
            <person name="Fan X."/>
            <person name="She Y.-M."/>
            <person name="Bagshaw R.D."/>
            <person name="Callahan J.W."/>
            <person name="Schachter H."/>
            <person name="Mahuran D.J."/>
        </authorList>
    </citation>
    <scope>GLYCOSYLATION [LARGE SCALE ANALYSIS] AT ASN-304</scope>
    <scope>IDENTIFICATION BY MASS SPECTROMETRY</scope>
</reference>
<evidence type="ECO:0000255" key="1"/>
<evidence type="ECO:0000269" key="2">
    <source>
    </source>
</evidence>
<evidence type="ECO:0000305" key="3"/>
<proteinExistence type="evidence at protein level"/>
<keyword id="KW-0325">Glycoprotein</keyword>
<keyword id="KW-0328">Glycosyltransferase</keyword>
<keyword id="KW-0472">Membrane</keyword>
<keyword id="KW-1185">Reference proteome</keyword>
<keyword id="KW-0732">Signal</keyword>
<keyword id="KW-0808">Transferase</keyword>
<keyword id="KW-0812">Transmembrane</keyword>
<keyword id="KW-1133">Transmembrane helix</keyword>
<accession>Q10941</accession>
<sequence length="531" mass="60204">MRLIFVLLATFVNAAFSYKILVFSPATSKSHLISNGRLADELARAGHDVTVLELDFLGISQTTNSVKVAKKRIIDGFQESTNFKNVLHGFSETVMEEPSFTDEIKGWWAYQNVYNDLCAEFLKMDDIFNELKNAKFDGFFAEQINLCGFGYAHALEIPRHFLISSCPFAAPVYDFTGLPMPTSTVAFAADLSISPTYTERARNLFVAVLTKLEFTLLNNRLQAHFQHKFGEHFPSLYSVTSDVDVIFVATDEIIDISTTTLQNIVHVGGLGVDDDVAEMDNVFASEMSKGKEGVIYFSLGTIANTTKIDSKVMRTVLDIVKKFPDYHFVIRADKYDLSTREYAKSVSNAFVSDWLPQPAILHHPRLKLFITHSGYNSIVEAARAGVPLINIPFMFDQNLNSRAVEKKGWGIRRHKKQLLTEPEEIEKAISEIIHNKKYSLKAQRIRDLIKSKPLSSSQLLIKTTEWAIKNHGLDEIKFESRGQTTWTYYNLDVIIPVFWLSISLVIPTIFGWYKFSCFGHVEEKKGKSKRD</sequence>
<organism>
    <name type="scientific">Caenorhabditis elegans</name>
    <dbReference type="NCBI Taxonomy" id="6239"/>
    <lineage>
        <taxon>Eukaryota</taxon>
        <taxon>Metazoa</taxon>
        <taxon>Ecdysozoa</taxon>
        <taxon>Nematoda</taxon>
        <taxon>Chromadorea</taxon>
        <taxon>Rhabditida</taxon>
        <taxon>Rhabditina</taxon>
        <taxon>Rhabditomorpha</taxon>
        <taxon>Rhabditoidea</taxon>
        <taxon>Rhabditidae</taxon>
        <taxon>Peloderinae</taxon>
        <taxon>Caenorhabditis</taxon>
    </lineage>
</organism>
<name>UGT46_CAEEL</name>
<protein>
    <recommendedName>
        <fullName>Putative UDP-glucuronosyltransferase ugt-46</fullName>
        <shortName>UDPGT 46</shortName>
        <ecNumber>2.4.1.17</ecNumber>
    </recommendedName>
</protein>
<gene>
    <name type="primary">ugt-46</name>
    <name type="synonym">ugt14</name>
    <name type="ORF">B0310.5</name>
</gene>
<feature type="signal peptide" evidence="1">
    <location>
        <begin position="1"/>
        <end position="17"/>
    </location>
</feature>
<feature type="chain" id="PRO_0000036053" description="Putative UDP-glucuronosyltransferase ugt-46">
    <location>
        <begin position="18"/>
        <end position="531"/>
    </location>
</feature>
<feature type="transmembrane region" description="Helical" evidence="1">
    <location>
        <begin position="493"/>
        <end position="513"/>
    </location>
</feature>
<feature type="glycosylation site" description="N-linked (GlcNAc...) asparagine" evidence="2">
    <location>
        <position position="304"/>
    </location>
</feature>